<dbReference type="EMBL" id="BX571856">
    <property type="protein sequence ID" value="CAG41176.1"/>
    <property type="molecule type" value="Genomic_DNA"/>
</dbReference>
<dbReference type="RefSeq" id="WP_000140675.1">
    <property type="nucleotide sequence ID" value="NC_002952.2"/>
</dbReference>
<dbReference type="SMR" id="Q6GEW8"/>
<dbReference type="KEGG" id="sar:SAR2195"/>
<dbReference type="HOGENOM" id="CLU_079215_4_2_9"/>
<dbReference type="Proteomes" id="UP000000596">
    <property type="component" value="Chromosome"/>
</dbReference>
<dbReference type="GO" id="GO:0005886">
    <property type="term" value="C:plasma membrane"/>
    <property type="evidence" value="ECO:0007669"/>
    <property type="project" value="UniProtKB-SubCell"/>
</dbReference>
<dbReference type="GO" id="GO:0045259">
    <property type="term" value="C:proton-transporting ATP synthase complex"/>
    <property type="evidence" value="ECO:0007669"/>
    <property type="project" value="UniProtKB-KW"/>
</dbReference>
<dbReference type="GO" id="GO:0046933">
    <property type="term" value="F:proton-transporting ATP synthase activity, rotational mechanism"/>
    <property type="evidence" value="ECO:0007669"/>
    <property type="project" value="UniProtKB-UniRule"/>
</dbReference>
<dbReference type="GO" id="GO:0046961">
    <property type="term" value="F:proton-transporting ATPase activity, rotational mechanism"/>
    <property type="evidence" value="ECO:0007669"/>
    <property type="project" value="TreeGrafter"/>
</dbReference>
<dbReference type="CDD" id="cd06503">
    <property type="entry name" value="ATP-synt_Fo_b"/>
    <property type="match status" value="1"/>
</dbReference>
<dbReference type="HAMAP" id="MF_01398">
    <property type="entry name" value="ATP_synth_b_bprime"/>
    <property type="match status" value="1"/>
</dbReference>
<dbReference type="InterPro" id="IPR028987">
    <property type="entry name" value="ATP_synth_B-like_membr_sf"/>
</dbReference>
<dbReference type="InterPro" id="IPR002146">
    <property type="entry name" value="ATP_synth_b/b'su_bac/chlpt"/>
</dbReference>
<dbReference type="InterPro" id="IPR005864">
    <property type="entry name" value="ATP_synth_F0_bsu_bac"/>
</dbReference>
<dbReference type="InterPro" id="IPR050059">
    <property type="entry name" value="ATP_synthase_B_chain"/>
</dbReference>
<dbReference type="NCBIfam" id="TIGR01144">
    <property type="entry name" value="ATP_synt_b"/>
    <property type="match status" value="1"/>
</dbReference>
<dbReference type="NCBIfam" id="NF009987">
    <property type="entry name" value="PRK13453.1"/>
    <property type="match status" value="1"/>
</dbReference>
<dbReference type="PANTHER" id="PTHR33445:SF1">
    <property type="entry name" value="ATP SYNTHASE SUBUNIT B"/>
    <property type="match status" value="1"/>
</dbReference>
<dbReference type="PANTHER" id="PTHR33445">
    <property type="entry name" value="ATP SYNTHASE SUBUNIT B', CHLOROPLASTIC"/>
    <property type="match status" value="1"/>
</dbReference>
<dbReference type="Pfam" id="PF00430">
    <property type="entry name" value="ATP-synt_B"/>
    <property type="match status" value="1"/>
</dbReference>
<dbReference type="SUPFAM" id="SSF81573">
    <property type="entry name" value="F1F0 ATP synthase subunit B, membrane domain"/>
    <property type="match status" value="1"/>
</dbReference>
<organism>
    <name type="scientific">Staphylococcus aureus (strain MRSA252)</name>
    <dbReference type="NCBI Taxonomy" id="282458"/>
    <lineage>
        <taxon>Bacteria</taxon>
        <taxon>Bacillati</taxon>
        <taxon>Bacillota</taxon>
        <taxon>Bacilli</taxon>
        <taxon>Bacillales</taxon>
        <taxon>Staphylococcaceae</taxon>
        <taxon>Staphylococcus</taxon>
    </lineage>
</organism>
<evidence type="ECO:0000255" key="1">
    <source>
        <dbReference type="HAMAP-Rule" id="MF_01398"/>
    </source>
</evidence>
<gene>
    <name evidence="1" type="primary">atpF</name>
    <name type="ordered locus">SAR2195</name>
</gene>
<reference key="1">
    <citation type="journal article" date="2004" name="Proc. Natl. Acad. Sci. U.S.A.">
        <title>Complete genomes of two clinical Staphylococcus aureus strains: evidence for the rapid evolution of virulence and drug resistance.</title>
        <authorList>
            <person name="Holden M.T.G."/>
            <person name="Feil E.J."/>
            <person name="Lindsay J.A."/>
            <person name="Peacock S.J."/>
            <person name="Day N.P.J."/>
            <person name="Enright M.C."/>
            <person name="Foster T.J."/>
            <person name="Moore C.E."/>
            <person name="Hurst L."/>
            <person name="Atkin R."/>
            <person name="Barron A."/>
            <person name="Bason N."/>
            <person name="Bentley S.D."/>
            <person name="Chillingworth C."/>
            <person name="Chillingworth T."/>
            <person name="Churcher C."/>
            <person name="Clark L."/>
            <person name="Corton C."/>
            <person name="Cronin A."/>
            <person name="Doggett J."/>
            <person name="Dowd L."/>
            <person name="Feltwell T."/>
            <person name="Hance Z."/>
            <person name="Harris B."/>
            <person name="Hauser H."/>
            <person name="Holroyd S."/>
            <person name="Jagels K."/>
            <person name="James K.D."/>
            <person name="Lennard N."/>
            <person name="Line A."/>
            <person name="Mayes R."/>
            <person name="Moule S."/>
            <person name="Mungall K."/>
            <person name="Ormond D."/>
            <person name="Quail M.A."/>
            <person name="Rabbinowitsch E."/>
            <person name="Rutherford K.M."/>
            <person name="Sanders M."/>
            <person name="Sharp S."/>
            <person name="Simmonds M."/>
            <person name="Stevens K."/>
            <person name="Whitehead S."/>
            <person name="Barrell B.G."/>
            <person name="Spratt B.G."/>
            <person name="Parkhill J."/>
        </authorList>
    </citation>
    <scope>NUCLEOTIDE SEQUENCE [LARGE SCALE GENOMIC DNA]</scope>
    <source>
        <strain>MRSA252</strain>
    </source>
</reference>
<keyword id="KW-0066">ATP synthesis</keyword>
<keyword id="KW-1003">Cell membrane</keyword>
<keyword id="KW-0138">CF(0)</keyword>
<keyword id="KW-0375">Hydrogen ion transport</keyword>
<keyword id="KW-0406">Ion transport</keyword>
<keyword id="KW-0472">Membrane</keyword>
<keyword id="KW-0812">Transmembrane</keyword>
<keyword id="KW-1133">Transmembrane helix</keyword>
<keyword id="KW-0813">Transport</keyword>
<accession>Q6GEW8</accession>
<protein>
    <recommendedName>
        <fullName evidence="1">ATP synthase subunit b</fullName>
    </recommendedName>
    <alternativeName>
        <fullName evidence="1">ATP synthase F(0) sector subunit b</fullName>
    </alternativeName>
    <alternativeName>
        <fullName evidence="1">ATPase subunit I</fullName>
    </alternativeName>
    <alternativeName>
        <fullName evidence="1">F-type ATPase subunit b</fullName>
        <shortName evidence="1">F-ATPase subunit b</shortName>
    </alternativeName>
</protein>
<sequence length="173" mass="19587">MTETANLFFLGAAGGVEWGTVIVQVLTFIVLLALLKKFAWGPLKDVMDKRERDINRDIDDAEQAKLNAQKLEEENKQKLKETQEEVQKILEDAKVQARQQQEQIIHEANVRANGMIETAQSEINSQKERAIADINNQVSELSVLIASKVLRKEISEQDQKALVDKYLKEAGDK</sequence>
<feature type="chain" id="PRO_0000223713" description="ATP synthase subunit b">
    <location>
        <begin position="1"/>
        <end position="173"/>
    </location>
</feature>
<feature type="transmembrane region" description="Helical" evidence="1">
    <location>
        <begin position="15"/>
        <end position="35"/>
    </location>
</feature>
<comment type="function">
    <text evidence="1">F(1)F(0) ATP synthase produces ATP from ADP in the presence of a proton or sodium gradient. F-type ATPases consist of two structural domains, F(1) containing the extramembraneous catalytic core and F(0) containing the membrane proton channel, linked together by a central stalk and a peripheral stalk. During catalysis, ATP synthesis in the catalytic domain of F(1) is coupled via a rotary mechanism of the central stalk subunits to proton translocation.</text>
</comment>
<comment type="function">
    <text evidence="1">Component of the F(0) channel, it forms part of the peripheral stalk, linking F(1) to F(0).</text>
</comment>
<comment type="subunit">
    <text evidence="1">F-type ATPases have 2 components, F(1) - the catalytic core - and F(0) - the membrane proton channel. F(1) has five subunits: alpha(3), beta(3), gamma(1), delta(1), epsilon(1). F(0) has three main subunits: a(1), b(2) and c(10-14). The alpha and beta chains form an alternating ring which encloses part of the gamma chain. F(1) is attached to F(0) by a central stalk formed by the gamma and epsilon chains, while a peripheral stalk is formed by the delta and b chains.</text>
</comment>
<comment type="subcellular location">
    <subcellularLocation>
        <location evidence="1">Cell membrane</location>
        <topology evidence="1">Single-pass membrane protein</topology>
    </subcellularLocation>
</comment>
<comment type="similarity">
    <text evidence="1">Belongs to the ATPase B chain family.</text>
</comment>
<proteinExistence type="inferred from homology"/>
<name>ATPF_STAAR</name>